<keyword id="KW-0256">Endoplasmic reticulum</keyword>
<keyword id="KW-0472">Membrane</keyword>
<keyword id="KW-0479">Metal-binding</keyword>
<keyword id="KW-1185">Reference proteome</keyword>
<keyword id="KW-0808">Transferase</keyword>
<keyword id="KW-0812">Transmembrane</keyword>
<keyword id="KW-1133">Transmembrane helix</keyword>
<keyword id="KW-0833">Ubl conjugation pathway</keyword>
<keyword id="KW-0862">Zinc</keyword>
<keyword id="KW-0863">Zinc-finger</keyword>
<organism>
    <name type="scientific">Xenopus tropicalis</name>
    <name type="common">Western clawed frog</name>
    <name type="synonym">Silurana tropicalis</name>
    <dbReference type="NCBI Taxonomy" id="8364"/>
    <lineage>
        <taxon>Eukaryota</taxon>
        <taxon>Metazoa</taxon>
        <taxon>Chordata</taxon>
        <taxon>Craniata</taxon>
        <taxon>Vertebrata</taxon>
        <taxon>Euteleostomi</taxon>
        <taxon>Amphibia</taxon>
        <taxon>Batrachia</taxon>
        <taxon>Anura</taxon>
        <taxon>Pipoidea</taxon>
        <taxon>Pipidae</taxon>
        <taxon>Xenopodinae</taxon>
        <taxon>Xenopus</taxon>
        <taxon>Silurana</taxon>
    </lineage>
</organism>
<proteinExistence type="evidence at transcript level"/>
<reference key="1">
    <citation type="submission" date="2006-10" db="EMBL/GenBank/DDBJ databases">
        <authorList>
            <consortium name="Sanger Xenopus tropicalis EST/cDNA project"/>
        </authorList>
    </citation>
    <scope>NUCLEOTIDE SEQUENCE [LARGE SCALE MRNA]</scope>
    <source>
        <tissue>Egg</tissue>
    </source>
</reference>
<dbReference type="EC" id="2.3.2.27" evidence="1"/>
<dbReference type="EMBL" id="CR761344">
    <property type="protein sequence ID" value="CAJ81809.1"/>
    <property type="molecule type" value="mRNA"/>
</dbReference>
<dbReference type="RefSeq" id="NP_001016349.1">
    <property type="nucleotide sequence ID" value="NM_001016349.2"/>
</dbReference>
<dbReference type="RefSeq" id="XP_012812416.1">
    <property type="nucleotide sequence ID" value="XM_012956962.1"/>
</dbReference>
<dbReference type="SMR" id="Q28GL3"/>
<dbReference type="FunCoup" id="Q28GL3">
    <property type="interactions" value="1120"/>
</dbReference>
<dbReference type="PaxDb" id="8364-ENSXETP00000055374"/>
<dbReference type="GeneID" id="549103"/>
<dbReference type="KEGG" id="xtr:549103"/>
<dbReference type="AGR" id="Xenbase:XB-GENE-984035"/>
<dbReference type="CTD" id="51136"/>
<dbReference type="Xenbase" id="XB-GENE-984035">
    <property type="gene designation" value="rnft1"/>
</dbReference>
<dbReference type="eggNOG" id="KOG4638">
    <property type="taxonomic scope" value="Eukaryota"/>
</dbReference>
<dbReference type="HOGENOM" id="CLU_039460_2_1_1"/>
<dbReference type="InParanoid" id="Q28GL3"/>
<dbReference type="OrthoDB" id="9049620at2759"/>
<dbReference type="TreeFam" id="TF331930"/>
<dbReference type="UniPathway" id="UPA00143"/>
<dbReference type="Proteomes" id="UP000008143">
    <property type="component" value="Chromosome 2"/>
</dbReference>
<dbReference type="Bgee" id="ENSXETG00000026210">
    <property type="expression patterns" value="Expressed in egg cell and 12 other cell types or tissues"/>
</dbReference>
<dbReference type="GO" id="GO:0005789">
    <property type="term" value="C:endoplasmic reticulum membrane"/>
    <property type="evidence" value="ECO:0007669"/>
    <property type="project" value="UniProtKB-SubCell"/>
</dbReference>
<dbReference type="GO" id="GO:0061630">
    <property type="term" value="F:ubiquitin protein ligase activity"/>
    <property type="evidence" value="ECO:0007669"/>
    <property type="project" value="InterPro"/>
</dbReference>
<dbReference type="GO" id="GO:0008270">
    <property type="term" value="F:zinc ion binding"/>
    <property type="evidence" value="ECO:0007669"/>
    <property type="project" value="UniProtKB-KW"/>
</dbReference>
<dbReference type="GO" id="GO:1904294">
    <property type="term" value="P:positive regulation of ERAD pathway"/>
    <property type="evidence" value="ECO:0007669"/>
    <property type="project" value="InterPro"/>
</dbReference>
<dbReference type="GO" id="GO:0016567">
    <property type="term" value="P:protein ubiquitination"/>
    <property type="evidence" value="ECO:0007669"/>
    <property type="project" value="UniProtKB-UniPathway"/>
</dbReference>
<dbReference type="CDD" id="cd16741">
    <property type="entry name" value="RING-HC_RNFT1"/>
    <property type="match status" value="1"/>
</dbReference>
<dbReference type="Gene3D" id="3.30.40.10">
    <property type="entry name" value="Zinc/RING finger domain, C3HC4 (zinc finger)"/>
    <property type="match status" value="1"/>
</dbReference>
<dbReference type="InterPro" id="IPR044235">
    <property type="entry name" value="RNFT1/2"/>
</dbReference>
<dbReference type="InterPro" id="IPR001841">
    <property type="entry name" value="Znf_RING"/>
</dbReference>
<dbReference type="InterPro" id="IPR013083">
    <property type="entry name" value="Znf_RING/FYVE/PHD"/>
</dbReference>
<dbReference type="InterPro" id="IPR017907">
    <property type="entry name" value="Znf_RING_CS"/>
</dbReference>
<dbReference type="PANTHER" id="PTHR15860:SF1">
    <property type="entry name" value="E3 UBIQUITIN-PROTEIN LIGASE RNFT1"/>
    <property type="match status" value="1"/>
</dbReference>
<dbReference type="PANTHER" id="PTHR15860">
    <property type="entry name" value="UNCHARACTERIZED RING FINGER-CONTAINING PROTEIN"/>
    <property type="match status" value="1"/>
</dbReference>
<dbReference type="Pfam" id="PF13639">
    <property type="entry name" value="zf-RING_2"/>
    <property type="match status" value="1"/>
</dbReference>
<dbReference type="SMART" id="SM00184">
    <property type="entry name" value="RING"/>
    <property type="match status" value="1"/>
</dbReference>
<dbReference type="SUPFAM" id="SSF57850">
    <property type="entry name" value="RING/U-box"/>
    <property type="match status" value="1"/>
</dbReference>
<dbReference type="PROSITE" id="PS00518">
    <property type="entry name" value="ZF_RING_1"/>
    <property type="match status" value="1"/>
</dbReference>
<dbReference type="PROSITE" id="PS50089">
    <property type="entry name" value="ZF_RING_2"/>
    <property type="match status" value="1"/>
</dbReference>
<feature type="chain" id="PRO_0000320639" description="E3 ubiquitin-protein ligase RNFT1">
    <location>
        <begin position="1"/>
        <end position="416"/>
    </location>
</feature>
<feature type="transmembrane region" description="Helical" evidence="2">
    <location>
        <begin position="146"/>
        <end position="166"/>
    </location>
</feature>
<feature type="transmembrane region" description="Helical" evidence="2">
    <location>
        <begin position="184"/>
        <end position="204"/>
    </location>
</feature>
<feature type="transmembrane region" description="Helical" evidence="2">
    <location>
        <begin position="214"/>
        <end position="234"/>
    </location>
</feature>
<feature type="transmembrane region" description="Helical" evidence="2">
    <location>
        <begin position="237"/>
        <end position="257"/>
    </location>
</feature>
<feature type="transmembrane region" description="Helical" evidence="2">
    <location>
        <begin position="265"/>
        <end position="287"/>
    </location>
</feature>
<feature type="transmembrane region" description="Helical" evidence="2">
    <location>
        <begin position="302"/>
        <end position="322"/>
    </location>
</feature>
<feature type="zinc finger region" description="RING-type" evidence="3">
    <location>
        <begin position="356"/>
        <end position="394"/>
    </location>
</feature>
<feature type="region of interest" description="Disordered" evidence="4">
    <location>
        <begin position="27"/>
        <end position="50"/>
    </location>
</feature>
<feature type="region of interest" description="Disordered" evidence="4">
    <location>
        <begin position="63"/>
        <end position="116"/>
    </location>
</feature>
<feature type="region of interest" description="Required for ubiquitin ligase activity and for protection against ER stress-induced cell death" evidence="1">
    <location>
        <begin position="349"/>
        <end position="400"/>
    </location>
</feature>
<feature type="compositionally biased region" description="Polar residues" evidence="4">
    <location>
        <begin position="27"/>
        <end position="45"/>
    </location>
</feature>
<feature type="compositionally biased region" description="Basic residues" evidence="4">
    <location>
        <begin position="77"/>
        <end position="86"/>
    </location>
</feature>
<accession>Q28GL3</accession>
<name>RNFT1_XENTR</name>
<protein>
    <recommendedName>
        <fullName evidence="5">E3 ubiquitin-protein ligase RNFT1</fullName>
        <ecNumber evidence="1">2.3.2.27</ecNumber>
    </recommendedName>
    <alternativeName>
        <fullName>RING finger and transmembrane domain-containing protein 1</fullName>
    </alternativeName>
</protein>
<sequence length="416" mass="47030">MKHRPVHERQCSTETKNWKENTQLIMQSSSGHTHHQPGSNDSPSVCMSLPVPQLSAEGSCTAGDVTIDLSSPESHHGARSSSRRVRPGNGRSLSRHGHTHSHDANGPEDANDADSREQSNSISEVFHFYKWLEKSFPYILIFSAKLVVQHITGISVGIGLLTTFLYANKCIVNQVFLRDKCSKLQCLWILVFLLFSSLLLYYTFSSQALYYSLVFMNPSLGPLHFFDALWVVGITDFIGKFFFMGLKCIILLVPSFVMSHKSKGYWYMALEEVAQCYCMLVSTPVWFRYLIDYGNQNSGAEWHFGILLALLYLILKLLIIFGQRKTSSNSLRLFLTQPNYGAAATKSQCSEVDGMCAICQAEFIKPIVLVCQHVFCEECISLWFNKEKTCPLCRTVISNQSHKWKDGATSLQLRIF</sequence>
<gene>
    <name type="primary">rnft1</name>
    <name type="ORF">TEgg046i15.1</name>
</gene>
<evidence type="ECO:0000250" key="1">
    <source>
        <dbReference type="UniProtKB" id="Q5M7Z0"/>
    </source>
</evidence>
<evidence type="ECO:0000255" key="2"/>
<evidence type="ECO:0000255" key="3">
    <source>
        <dbReference type="PROSITE-ProRule" id="PRU00175"/>
    </source>
</evidence>
<evidence type="ECO:0000256" key="4">
    <source>
        <dbReference type="SAM" id="MobiDB-lite"/>
    </source>
</evidence>
<evidence type="ECO:0000305" key="5"/>
<comment type="function">
    <text evidence="1">E3 ubiquitin-protein ligase that acts in the endoplasmic reticulum (ER)-associated degradation (ERAD) pathway, which targets misfolded proteins that accumulate in the endoplasmic reticulum (ER) for ubiquitination and subsequent proteasome-mediated degradation. Protects cells from ER stress-induced apoptosis.</text>
</comment>
<comment type="catalytic activity">
    <reaction evidence="1">
        <text>S-ubiquitinyl-[E2 ubiquitin-conjugating enzyme]-L-cysteine + [acceptor protein]-L-lysine = [E2 ubiquitin-conjugating enzyme]-L-cysteine + N(6)-ubiquitinyl-[acceptor protein]-L-lysine.</text>
        <dbReference type="EC" id="2.3.2.27"/>
    </reaction>
</comment>
<comment type="pathway">
    <text evidence="1">Protein modification; protein ubiquitination.</text>
</comment>
<comment type="subcellular location">
    <subcellularLocation>
        <location evidence="1">Endoplasmic reticulum membrane</location>
        <topology evidence="1">Multi-pass membrane protein</topology>
    </subcellularLocation>
</comment>